<name>PATR_MYCA9</name>
<dbReference type="EC" id="2.6.1.57" evidence="1"/>
<dbReference type="EMBL" id="CU458896">
    <property type="protein sequence ID" value="CAM60320.1"/>
    <property type="molecule type" value="Genomic_DNA"/>
</dbReference>
<dbReference type="SMR" id="B1MFC0"/>
<dbReference type="GeneID" id="93377165"/>
<dbReference type="KEGG" id="mab:MAB_0220c"/>
<dbReference type="Proteomes" id="UP000007137">
    <property type="component" value="Chromosome"/>
</dbReference>
<dbReference type="GO" id="GO:0008793">
    <property type="term" value="F:aromatic-amino-acid transaminase activity"/>
    <property type="evidence" value="ECO:0007669"/>
    <property type="project" value="UniProtKB-UniRule"/>
</dbReference>
<dbReference type="GO" id="GO:0004400">
    <property type="term" value="F:histidinol-phosphate transaminase activity"/>
    <property type="evidence" value="ECO:0007669"/>
    <property type="project" value="InterPro"/>
</dbReference>
<dbReference type="GO" id="GO:0030170">
    <property type="term" value="F:pyridoxal phosphate binding"/>
    <property type="evidence" value="ECO:0007669"/>
    <property type="project" value="UniProtKB-UniRule"/>
</dbReference>
<dbReference type="GO" id="GO:0000105">
    <property type="term" value="P:L-histidine biosynthetic process"/>
    <property type="evidence" value="ECO:0007669"/>
    <property type="project" value="InterPro"/>
</dbReference>
<dbReference type="CDD" id="cd00609">
    <property type="entry name" value="AAT_like"/>
    <property type="match status" value="1"/>
</dbReference>
<dbReference type="Gene3D" id="3.90.1150.10">
    <property type="entry name" value="Aspartate Aminotransferase, domain 1"/>
    <property type="match status" value="1"/>
</dbReference>
<dbReference type="Gene3D" id="3.40.640.10">
    <property type="entry name" value="Type I PLP-dependent aspartate aminotransferase-like (Major domain)"/>
    <property type="match status" value="1"/>
</dbReference>
<dbReference type="HAMAP" id="MF_01023">
    <property type="entry name" value="HisC_aminotrans_2"/>
    <property type="match status" value="1"/>
</dbReference>
<dbReference type="HAMAP" id="MF_01513">
    <property type="entry name" value="Phe_aminotrans_2"/>
    <property type="match status" value="1"/>
</dbReference>
<dbReference type="InterPro" id="IPR001917">
    <property type="entry name" value="Aminotrans_II_pyridoxalP_BS"/>
</dbReference>
<dbReference type="InterPro" id="IPR004839">
    <property type="entry name" value="Aminotransferase_I/II_large"/>
</dbReference>
<dbReference type="InterPro" id="IPR024892">
    <property type="entry name" value="ArAT"/>
</dbReference>
<dbReference type="InterPro" id="IPR005861">
    <property type="entry name" value="HisP_aminotrans"/>
</dbReference>
<dbReference type="InterPro" id="IPR050106">
    <property type="entry name" value="HistidinolP_aminotransfase"/>
</dbReference>
<dbReference type="InterPro" id="IPR015424">
    <property type="entry name" value="PyrdxlP-dep_Trfase"/>
</dbReference>
<dbReference type="InterPro" id="IPR015421">
    <property type="entry name" value="PyrdxlP-dep_Trfase_major"/>
</dbReference>
<dbReference type="InterPro" id="IPR015422">
    <property type="entry name" value="PyrdxlP-dep_Trfase_small"/>
</dbReference>
<dbReference type="NCBIfam" id="TIGR01141">
    <property type="entry name" value="hisC"/>
    <property type="match status" value="1"/>
</dbReference>
<dbReference type="NCBIfam" id="NF002878">
    <property type="entry name" value="PRK03321.1"/>
    <property type="match status" value="1"/>
</dbReference>
<dbReference type="PANTHER" id="PTHR43643:SF3">
    <property type="entry name" value="HISTIDINOL-PHOSPHATE AMINOTRANSFERASE"/>
    <property type="match status" value="1"/>
</dbReference>
<dbReference type="PANTHER" id="PTHR43643">
    <property type="entry name" value="HISTIDINOL-PHOSPHATE AMINOTRANSFERASE 2"/>
    <property type="match status" value="1"/>
</dbReference>
<dbReference type="Pfam" id="PF00155">
    <property type="entry name" value="Aminotran_1_2"/>
    <property type="match status" value="1"/>
</dbReference>
<dbReference type="SUPFAM" id="SSF53383">
    <property type="entry name" value="PLP-dependent transferases"/>
    <property type="match status" value="1"/>
</dbReference>
<dbReference type="PROSITE" id="PS00599">
    <property type="entry name" value="AA_TRANSFER_CLASS_2"/>
    <property type="match status" value="1"/>
</dbReference>
<sequence length="347" mass="37500">MPARLRPELTELPAYTPGRNVPGAIKLASNETVQEPLPSVRAALAEAGSLINRYPDNGYAELRSHLAKHVDMPPEHIAVGCGSVSLCQQLVQITATVGDEVLFGWRSFETYPLVVRVAGATPVQVPLVDHTYDLAAMAAAVTDVTRLIFVCNPNNPTGTVVRPAELRRFVESVPPHILIAIDEAYVEYVREDFTDSLALVREHPNVVVLRTFSKAYGLAGLRVGYAVGDPDVITTLGKVYVPFSASSLAQAAAVASLGAAEELLARTNDVVTERARVTSALREAGYQVPPSQANFVWLPLGERSTEFAQASAEARIIVRPFGTDGVRVTIGAPMENDAFLKFSRAWR</sequence>
<protein>
    <recommendedName>
        <fullName evidence="1">Aromatic amino acid aminotransferase</fullName>
        <shortName evidence="1">ArAT</shortName>
        <ecNumber evidence="1">2.6.1.57</ecNumber>
    </recommendedName>
</protein>
<feature type="chain" id="PRO_1000146150" description="Aromatic amino acid aminotransferase">
    <location>
        <begin position="1"/>
        <end position="347"/>
    </location>
</feature>
<feature type="modified residue" description="N6-(pyridoxal phosphate)lysine" evidence="1">
    <location>
        <position position="214"/>
    </location>
</feature>
<keyword id="KW-0032">Aminotransferase</keyword>
<keyword id="KW-0663">Pyridoxal phosphate</keyword>
<keyword id="KW-1185">Reference proteome</keyword>
<keyword id="KW-0808">Transferase</keyword>
<comment type="function">
    <text evidence="1">Aminotransferase that catalyzes the conversion of aromatic amino acids and 2-oxoglutarate into corresponding aromatic oxo acids and L-glutamate.</text>
</comment>
<comment type="catalytic activity">
    <reaction evidence="1">
        <text>an aromatic L-alpha-amino acid + 2-oxoglutarate = an aromatic oxo-acid + L-glutamate</text>
        <dbReference type="Rhea" id="RHEA:17533"/>
        <dbReference type="ChEBI" id="CHEBI:16810"/>
        <dbReference type="ChEBI" id="CHEBI:29985"/>
        <dbReference type="ChEBI" id="CHEBI:73309"/>
        <dbReference type="ChEBI" id="CHEBI:84824"/>
        <dbReference type="EC" id="2.6.1.57"/>
    </reaction>
</comment>
<comment type="cofactor">
    <cofactor evidence="1">
        <name>pyridoxal 5'-phosphate</name>
        <dbReference type="ChEBI" id="CHEBI:597326"/>
    </cofactor>
</comment>
<comment type="subunit">
    <text evidence="1">Homodimer.</text>
</comment>
<comment type="similarity">
    <text evidence="1">Belongs to the class-II pyridoxal-phosphate-dependent aminotransferase family.</text>
</comment>
<gene>
    <name evidence="1" type="primary">pat</name>
    <name type="ordered locus">MAB_0220c</name>
</gene>
<proteinExistence type="inferred from homology"/>
<organism>
    <name type="scientific">Mycobacteroides abscessus (strain ATCC 19977 / DSM 44196 / CCUG 20993 / CIP 104536 / JCM 13569 / NCTC 13031 / TMC 1543 / L948)</name>
    <name type="common">Mycobacterium abscessus</name>
    <dbReference type="NCBI Taxonomy" id="561007"/>
    <lineage>
        <taxon>Bacteria</taxon>
        <taxon>Bacillati</taxon>
        <taxon>Actinomycetota</taxon>
        <taxon>Actinomycetes</taxon>
        <taxon>Mycobacteriales</taxon>
        <taxon>Mycobacteriaceae</taxon>
        <taxon>Mycobacteroides</taxon>
        <taxon>Mycobacteroides abscessus</taxon>
    </lineage>
</organism>
<accession>B1MFC0</accession>
<reference key="1">
    <citation type="journal article" date="2009" name="PLoS ONE">
        <title>Non mycobacterial virulence genes in the genome of the emerging pathogen Mycobacterium abscessus.</title>
        <authorList>
            <person name="Ripoll F."/>
            <person name="Pasek S."/>
            <person name="Schenowitz C."/>
            <person name="Dossat C."/>
            <person name="Barbe V."/>
            <person name="Rottman M."/>
            <person name="Macheras E."/>
            <person name="Heym B."/>
            <person name="Herrmann J.L."/>
            <person name="Daffe M."/>
            <person name="Brosch R."/>
            <person name="Risler J.L."/>
            <person name="Gaillard J.L."/>
        </authorList>
    </citation>
    <scope>NUCLEOTIDE SEQUENCE [LARGE SCALE GENOMIC DNA]</scope>
    <source>
        <strain>ATCC 19977 / DSM 44196 / CCUG 20993 / CIP 104536 / JCM 13569 / NCTC 13031 / TMC 1543 / L948</strain>
    </source>
</reference>
<evidence type="ECO:0000255" key="1">
    <source>
        <dbReference type="HAMAP-Rule" id="MF_01513"/>
    </source>
</evidence>